<comment type="function">
    <text evidence="1">Catalyzes the NADPH-dependent reduction of 7-cyano-7-deazaguanine (preQ0) to 7-aminomethyl-7-deazaguanine (preQ1).</text>
</comment>
<comment type="catalytic activity">
    <reaction evidence="1">
        <text>7-aminomethyl-7-carbaguanine + 2 NADP(+) = 7-cyano-7-deazaguanine + 2 NADPH + 3 H(+)</text>
        <dbReference type="Rhea" id="RHEA:13409"/>
        <dbReference type="ChEBI" id="CHEBI:15378"/>
        <dbReference type="ChEBI" id="CHEBI:45075"/>
        <dbReference type="ChEBI" id="CHEBI:57783"/>
        <dbReference type="ChEBI" id="CHEBI:58349"/>
        <dbReference type="ChEBI" id="CHEBI:58703"/>
        <dbReference type="EC" id="1.7.1.13"/>
    </reaction>
</comment>
<comment type="pathway">
    <text evidence="1">tRNA modification; tRNA-queuosine biosynthesis.</text>
</comment>
<comment type="subcellular location">
    <subcellularLocation>
        <location evidence="1">Cytoplasm</location>
    </subcellularLocation>
</comment>
<comment type="similarity">
    <text evidence="1">Belongs to the GTP cyclohydrolase I family. QueF type 1 subfamily.</text>
</comment>
<organism>
    <name type="scientific">Parasynechococcus marenigrum (strain WH8102)</name>
    <dbReference type="NCBI Taxonomy" id="84588"/>
    <lineage>
        <taxon>Bacteria</taxon>
        <taxon>Bacillati</taxon>
        <taxon>Cyanobacteriota</taxon>
        <taxon>Cyanophyceae</taxon>
        <taxon>Synechococcales</taxon>
        <taxon>Prochlorococcaceae</taxon>
        <taxon>Parasynechococcus</taxon>
        <taxon>Parasynechococcus marenigrum</taxon>
    </lineage>
</organism>
<sequence>MTDQLTQTPLYGERAIAEAELICFDNPRPGRPYEVSIELPEFTCKCPFSSYPDFAVLRLIYQPGPRVVELKAIKLYVNSYRDQSISHEEVTNRILDDLVAATDPVWMQLEADFNPRGNVHTVVRVSHGTRQPC</sequence>
<gene>
    <name evidence="1" type="primary">queF</name>
    <name type="ordered locus">SYNW0463</name>
</gene>
<dbReference type="EC" id="1.7.1.13" evidence="1"/>
<dbReference type="EMBL" id="BX569690">
    <property type="protein sequence ID" value="CAE06978.1"/>
    <property type="molecule type" value="Genomic_DNA"/>
</dbReference>
<dbReference type="SMR" id="Q7U8Z6"/>
<dbReference type="STRING" id="84588.SYNW0463"/>
<dbReference type="KEGG" id="syw:SYNW0463"/>
<dbReference type="eggNOG" id="COG0780">
    <property type="taxonomic scope" value="Bacteria"/>
</dbReference>
<dbReference type="HOGENOM" id="CLU_102489_1_1_3"/>
<dbReference type="UniPathway" id="UPA00392"/>
<dbReference type="Proteomes" id="UP000001422">
    <property type="component" value="Chromosome"/>
</dbReference>
<dbReference type="GO" id="GO:0005737">
    <property type="term" value="C:cytoplasm"/>
    <property type="evidence" value="ECO:0007669"/>
    <property type="project" value="UniProtKB-SubCell"/>
</dbReference>
<dbReference type="GO" id="GO:0033739">
    <property type="term" value="F:preQ1 synthase activity"/>
    <property type="evidence" value="ECO:0007669"/>
    <property type="project" value="UniProtKB-UniRule"/>
</dbReference>
<dbReference type="GO" id="GO:0008616">
    <property type="term" value="P:queuosine biosynthetic process"/>
    <property type="evidence" value="ECO:0007669"/>
    <property type="project" value="UniProtKB-UniRule"/>
</dbReference>
<dbReference type="GO" id="GO:0006400">
    <property type="term" value="P:tRNA modification"/>
    <property type="evidence" value="ECO:0007669"/>
    <property type="project" value="UniProtKB-UniRule"/>
</dbReference>
<dbReference type="Gene3D" id="3.30.1130.10">
    <property type="match status" value="1"/>
</dbReference>
<dbReference type="HAMAP" id="MF_00818">
    <property type="entry name" value="QueF_type1"/>
    <property type="match status" value="1"/>
</dbReference>
<dbReference type="InterPro" id="IPR043133">
    <property type="entry name" value="GTP-CH-I_C/QueF"/>
</dbReference>
<dbReference type="InterPro" id="IPR050084">
    <property type="entry name" value="NADPH_dep_7-cyano-7-deazaG_red"/>
</dbReference>
<dbReference type="InterPro" id="IPR029500">
    <property type="entry name" value="QueF"/>
</dbReference>
<dbReference type="InterPro" id="IPR016856">
    <property type="entry name" value="QueF_type1"/>
</dbReference>
<dbReference type="NCBIfam" id="TIGR03139">
    <property type="entry name" value="QueF-II"/>
    <property type="match status" value="1"/>
</dbReference>
<dbReference type="PANTHER" id="PTHR34354">
    <property type="entry name" value="NADPH-DEPENDENT 7-CYANO-7-DEAZAGUANINE REDUCTASE"/>
    <property type="match status" value="1"/>
</dbReference>
<dbReference type="PANTHER" id="PTHR34354:SF1">
    <property type="entry name" value="NADPH-DEPENDENT 7-CYANO-7-DEAZAGUANINE REDUCTASE"/>
    <property type="match status" value="1"/>
</dbReference>
<dbReference type="Pfam" id="PF14489">
    <property type="entry name" value="QueF"/>
    <property type="match status" value="1"/>
</dbReference>
<dbReference type="PIRSF" id="PIRSF027377">
    <property type="entry name" value="Nitrile_oxidored_QueF"/>
    <property type="match status" value="1"/>
</dbReference>
<dbReference type="SUPFAM" id="SSF55620">
    <property type="entry name" value="Tetrahydrobiopterin biosynthesis enzymes-like"/>
    <property type="match status" value="1"/>
</dbReference>
<keyword id="KW-0963">Cytoplasm</keyword>
<keyword id="KW-0521">NADP</keyword>
<keyword id="KW-0560">Oxidoreductase</keyword>
<keyword id="KW-0671">Queuosine biosynthesis</keyword>
<protein>
    <recommendedName>
        <fullName evidence="1">NADPH-dependent 7-cyano-7-deazaguanine reductase</fullName>
        <ecNumber evidence="1">1.7.1.13</ecNumber>
    </recommendedName>
    <alternativeName>
        <fullName evidence="1">7-cyano-7-carbaguanine reductase</fullName>
    </alternativeName>
    <alternativeName>
        <fullName evidence="1">NADPH-dependent nitrile oxidoreductase</fullName>
    </alternativeName>
    <alternativeName>
        <fullName evidence="1">PreQ(0) reductase</fullName>
    </alternativeName>
</protein>
<name>QUEF_PARMW</name>
<reference key="1">
    <citation type="journal article" date="2003" name="Nature">
        <title>The genome of a motile marine Synechococcus.</title>
        <authorList>
            <person name="Palenik B."/>
            <person name="Brahamsha B."/>
            <person name="Larimer F.W."/>
            <person name="Land M.L."/>
            <person name="Hauser L."/>
            <person name="Chain P."/>
            <person name="Lamerdin J.E."/>
            <person name="Regala W."/>
            <person name="Allen E.E."/>
            <person name="McCarren J."/>
            <person name="Paulsen I.T."/>
            <person name="Dufresne A."/>
            <person name="Partensky F."/>
            <person name="Webb E.A."/>
            <person name="Waterbury J."/>
        </authorList>
    </citation>
    <scope>NUCLEOTIDE SEQUENCE [LARGE SCALE GENOMIC DNA]</scope>
    <source>
        <strain>WH8102</strain>
    </source>
</reference>
<evidence type="ECO:0000255" key="1">
    <source>
        <dbReference type="HAMAP-Rule" id="MF_00818"/>
    </source>
</evidence>
<proteinExistence type="inferred from homology"/>
<accession>Q7U8Z6</accession>
<feature type="chain" id="PRO_0000163012" description="NADPH-dependent 7-cyano-7-deazaguanine reductase">
    <location>
        <begin position="1"/>
        <end position="133"/>
    </location>
</feature>
<feature type="active site" description="Thioimide intermediate" evidence="1">
    <location>
        <position position="46"/>
    </location>
</feature>
<feature type="active site" description="Proton donor" evidence="1">
    <location>
        <position position="53"/>
    </location>
</feature>
<feature type="binding site" evidence="1">
    <location>
        <begin position="68"/>
        <end position="70"/>
    </location>
    <ligand>
        <name>substrate</name>
    </ligand>
</feature>
<feature type="binding site" evidence="1">
    <location>
        <begin position="87"/>
        <end position="88"/>
    </location>
    <ligand>
        <name>substrate</name>
    </ligand>
</feature>